<proteinExistence type="evidence at protein level"/>
<organism>
    <name type="scientific">Emericella nidulans (strain FGSC A4 / ATCC 38163 / CBS 112.46 / NRRL 194 / M139)</name>
    <name type="common">Aspergillus nidulans</name>
    <dbReference type="NCBI Taxonomy" id="227321"/>
    <lineage>
        <taxon>Eukaryota</taxon>
        <taxon>Fungi</taxon>
        <taxon>Dikarya</taxon>
        <taxon>Ascomycota</taxon>
        <taxon>Pezizomycotina</taxon>
        <taxon>Eurotiomycetes</taxon>
        <taxon>Eurotiomycetidae</taxon>
        <taxon>Eurotiales</taxon>
        <taxon>Aspergillaceae</taxon>
        <taxon>Aspergillus</taxon>
        <taxon>Aspergillus subgen. Nidulantes</taxon>
    </lineage>
</organism>
<feature type="chain" id="PRO_0000064241" description="Glycylpeptide N-tetradecanoyltransferase">
    <location>
        <begin position="1"/>
        <end position="493"/>
    </location>
</feature>
<feature type="region of interest" description="Disordered" evidence="3">
    <location>
        <begin position="1"/>
        <end position="30"/>
    </location>
</feature>
<feature type="active site" description="Proton acceptor; via carboxylate" evidence="1">
    <location>
        <position position="493"/>
    </location>
</feature>
<feature type="binding site" evidence="2">
    <location>
        <begin position="82"/>
        <end position="85"/>
    </location>
    <ligand>
        <name>tetradecanoyl-CoA</name>
        <dbReference type="ChEBI" id="CHEBI:57385"/>
    </ligand>
</feature>
<feature type="binding site" evidence="2">
    <location>
        <begin position="216"/>
        <end position="218"/>
    </location>
    <ligand>
        <name>tetradecanoyl-CoA</name>
        <dbReference type="ChEBI" id="CHEBI:57385"/>
    </ligand>
</feature>
<feature type="binding site" evidence="2">
    <location>
        <begin position="224"/>
        <end position="228"/>
    </location>
    <ligand>
        <name>tetradecanoyl-CoA</name>
        <dbReference type="ChEBI" id="CHEBI:57385"/>
    </ligand>
</feature>
<feature type="mutagenesis site" description="Causes a temperature sensitive growth defect." evidence="4">
    <original>D</original>
    <variation>Y</variation>
    <location>
        <position position="370"/>
    </location>
</feature>
<dbReference type="EC" id="2.3.1.97" evidence="4"/>
<dbReference type="EMBL" id="AY057437">
    <property type="protein sequence ID" value="AAL14203.1"/>
    <property type="status" value="ALT_SEQ"/>
    <property type="molecule type" value="Genomic_DNA"/>
</dbReference>
<dbReference type="EMBL" id="AACD01000062">
    <property type="protein sequence ID" value="EAA59104.1"/>
    <property type="status" value="ALT_SEQ"/>
    <property type="molecule type" value="Genomic_DNA"/>
</dbReference>
<dbReference type="EMBL" id="BN001302">
    <property type="protein sequence ID" value="CBF75267.1"/>
    <property type="molecule type" value="Genomic_DNA"/>
</dbReference>
<dbReference type="RefSeq" id="XP_661443.1">
    <property type="nucleotide sequence ID" value="XM_656351.1"/>
</dbReference>
<dbReference type="SMR" id="Q8TFN1"/>
<dbReference type="FunCoup" id="Q8TFN1">
    <property type="interactions" value="924"/>
</dbReference>
<dbReference type="STRING" id="227321.Q8TFN1"/>
<dbReference type="EnsemblFungi" id="CBF75267">
    <property type="protein sequence ID" value="CBF75267"/>
    <property type="gene ID" value="ANIA_03839"/>
</dbReference>
<dbReference type="VEuPathDB" id="FungiDB:AN3839"/>
<dbReference type="eggNOG" id="KOG2779">
    <property type="taxonomic scope" value="Eukaryota"/>
</dbReference>
<dbReference type="HOGENOM" id="CLU_022882_2_0_1"/>
<dbReference type="InParanoid" id="Q8TFN1"/>
<dbReference type="OMA" id="GWKRDWH"/>
<dbReference type="OrthoDB" id="60315at2759"/>
<dbReference type="Proteomes" id="UP000000560">
    <property type="component" value="Chromosome II"/>
</dbReference>
<dbReference type="GO" id="GO:0005829">
    <property type="term" value="C:cytosol"/>
    <property type="evidence" value="ECO:0000318"/>
    <property type="project" value="GO_Central"/>
</dbReference>
<dbReference type="GO" id="GO:0004379">
    <property type="term" value="F:glycylpeptide N-tetradecanoyltransferase activity"/>
    <property type="evidence" value="ECO:0000315"/>
    <property type="project" value="AspGD"/>
</dbReference>
<dbReference type="GO" id="GO:0030010">
    <property type="term" value="P:establishment of cell polarity"/>
    <property type="evidence" value="ECO:0000315"/>
    <property type="project" value="AspGD"/>
</dbReference>
<dbReference type="GO" id="GO:0018008">
    <property type="term" value="P:N-terminal peptidyl-glycine N-myristoylation"/>
    <property type="evidence" value="ECO:0000255"/>
    <property type="project" value="AspGD"/>
</dbReference>
<dbReference type="GO" id="GO:0072657">
    <property type="term" value="P:protein localization to membrane"/>
    <property type="evidence" value="ECO:0000318"/>
    <property type="project" value="GO_Central"/>
</dbReference>
<dbReference type="FunFam" id="3.40.630.170:FF:000003">
    <property type="entry name" value="Glycylpeptide N-tetradecanoyltransferase"/>
    <property type="match status" value="1"/>
</dbReference>
<dbReference type="FunFam" id="3.40.630.30:FF:000042">
    <property type="entry name" value="Glycylpeptide N-tetradecanoyltransferase"/>
    <property type="match status" value="1"/>
</dbReference>
<dbReference type="FunFam" id="3.40.630.30:FF:000056">
    <property type="entry name" value="Glycylpeptide N-tetradecanoyltransferase"/>
    <property type="match status" value="1"/>
</dbReference>
<dbReference type="Gene3D" id="3.40.630.30">
    <property type="match status" value="2"/>
</dbReference>
<dbReference type="InterPro" id="IPR016181">
    <property type="entry name" value="Acyl_CoA_acyltransferase"/>
</dbReference>
<dbReference type="InterPro" id="IPR000903">
    <property type="entry name" value="NMT"/>
</dbReference>
<dbReference type="InterPro" id="IPR022677">
    <property type="entry name" value="NMT_C"/>
</dbReference>
<dbReference type="InterPro" id="IPR022678">
    <property type="entry name" value="NMT_CS"/>
</dbReference>
<dbReference type="InterPro" id="IPR022676">
    <property type="entry name" value="NMT_N"/>
</dbReference>
<dbReference type="PANTHER" id="PTHR11377:SF5">
    <property type="entry name" value="GLYCYLPEPTIDE N-TETRADECANOYLTRANSFERASE"/>
    <property type="match status" value="1"/>
</dbReference>
<dbReference type="PANTHER" id="PTHR11377">
    <property type="entry name" value="N-MYRISTOYL TRANSFERASE"/>
    <property type="match status" value="1"/>
</dbReference>
<dbReference type="Pfam" id="PF01233">
    <property type="entry name" value="NMT"/>
    <property type="match status" value="1"/>
</dbReference>
<dbReference type="Pfam" id="PF02799">
    <property type="entry name" value="NMT_C"/>
    <property type="match status" value="1"/>
</dbReference>
<dbReference type="PIRSF" id="PIRSF015892">
    <property type="entry name" value="N-myristl_transf"/>
    <property type="match status" value="1"/>
</dbReference>
<dbReference type="SUPFAM" id="SSF55729">
    <property type="entry name" value="Acyl-CoA N-acyltransferases (Nat)"/>
    <property type="match status" value="2"/>
</dbReference>
<dbReference type="PROSITE" id="PS00975">
    <property type="entry name" value="NMT_1"/>
    <property type="match status" value="1"/>
</dbReference>
<dbReference type="PROSITE" id="PS00976">
    <property type="entry name" value="NMT_2"/>
    <property type="match status" value="1"/>
</dbReference>
<gene>
    <name type="primary">swoF</name>
    <name type="synonym">nmt1</name>
    <name type="ORF">AN3839</name>
</gene>
<evidence type="ECO:0000250" key="1"/>
<evidence type="ECO:0000250" key="2">
    <source>
        <dbReference type="UniProtKB" id="P14743"/>
    </source>
</evidence>
<evidence type="ECO:0000256" key="3">
    <source>
        <dbReference type="SAM" id="MobiDB-lite"/>
    </source>
</evidence>
<evidence type="ECO:0000269" key="4">
    <source>
    </source>
</evidence>
<evidence type="ECO:0000305" key="5"/>
<reference key="1">
    <citation type="journal article" date="2002" name="Eukaryot. Cell">
        <title>Aspergillus nidulans swoF encodes an N-myristoyl transferase.</title>
        <authorList>
            <person name="Shaw B.D."/>
            <person name="Momany C."/>
            <person name="Momany M."/>
        </authorList>
    </citation>
    <scope>NUCLEOTIDE SEQUENCE [GENOMIC DNA]</scope>
    <scope>FUNCTION</scope>
    <scope>MUTAGENESIS OF ASP-370</scope>
    <scope>CATALYTIC ACTIVITY</scope>
</reference>
<reference key="2">
    <citation type="journal article" date="2005" name="Nature">
        <title>Sequencing of Aspergillus nidulans and comparative analysis with A. fumigatus and A. oryzae.</title>
        <authorList>
            <person name="Galagan J.E."/>
            <person name="Calvo S.E."/>
            <person name="Cuomo C."/>
            <person name="Ma L.-J."/>
            <person name="Wortman J.R."/>
            <person name="Batzoglou S."/>
            <person name="Lee S.-I."/>
            <person name="Bastuerkmen M."/>
            <person name="Spevak C.C."/>
            <person name="Clutterbuck J."/>
            <person name="Kapitonov V."/>
            <person name="Jurka J."/>
            <person name="Scazzocchio C."/>
            <person name="Farman M.L."/>
            <person name="Butler J."/>
            <person name="Purcell S."/>
            <person name="Harris S."/>
            <person name="Braus G.H."/>
            <person name="Draht O."/>
            <person name="Busch S."/>
            <person name="D'Enfert C."/>
            <person name="Bouchier C."/>
            <person name="Goldman G.H."/>
            <person name="Bell-Pedersen D."/>
            <person name="Griffiths-Jones S."/>
            <person name="Doonan J.H."/>
            <person name="Yu J."/>
            <person name="Vienken K."/>
            <person name="Pain A."/>
            <person name="Freitag M."/>
            <person name="Selker E.U."/>
            <person name="Archer D.B."/>
            <person name="Penalva M.A."/>
            <person name="Oakley B.R."/>
            <person name="Momany M."/>
            <person name="Tanaka T."/>
            <person name="Kumagai T."/>
            <person name="Asai K."/>
            <person name="Machida M."/>
            <person name="Nierman W.C."/>
            <person name="Denning D.W."/>
            <person name="Caddick M.X."/>
            <person name="Hynes M."/>
            <person name="Paoletti M."/>
            <person name="Fischer R."/>
            <person name="Miller B.L."/>
            <person name="Dyer P.S."/>
            <person name="Sachs M.S."/>
            <person name="Osmani S.A."/>
            <person name="Birren B.W."/>
        </authorList>
    </citation>
    <scope>NUCLEOTIDE SEQUENCE [LARGE SCALE GENOMIC DNA]</scope>
    <source>
        <strain>FGSC A4 / ATCC 38163 / CBS 112.46 / NRRL 194 / M139</strain>
    </source>
</reference>
<reference key="3">
    <citation type="journal article" date="2009" name="Fungal Genet. Biol.">
        <title>The 2008 update of the Aspergillus nidulans genome annotation: a community effort.</title>
        <authorList>
            <person name="Wortman J.R."/>
            <person name="Gilsenan J.M."/>
            <person name="Joardar V."/>
            <person name="Deegan J."/>
            <person name="Clutterbuck J."/>
            <person name="Andersen M.R."/>
            <person name="Archer D."/>
            <person name="Bencina M."/>
            <person name="Braus G."/>
            <person name="Coutinho P."/>
            <person name="von Dohren H."/>
            <person name="Doonan J."/>
            <person name="Driessen A.J."/>
            <person name="Durek P."/>
            <person name="Espeso E."/>
            <person name="Fekete E."/>
            <person name="Flipphi M."/>
            <person name="Estrada C.G."/>
            <person name="Geysens S."/>
            <person name="Goldman G."/>
            <person name="de Groot P.W."/>
            <person name="Hansen K."/>
            <person name="Harris S.D."/>
            <person name="Heinekamp T."/>
            <person name="Helmstaedt K."/>
            <person name="Henrissat B."/>
            <person name="Hofmann G."/>
            <person name="Homan T."/>
            <person name="Horio T."/>
            <person name="Horiuchi H."/>
            <person name="James S."/>
            <person name="Jones M."/>
            <person name="Karaffa L."/>
            <person name="Karanyi Z."/>
            <person name="Kato M."/>
            <person name="Keller N."/>
            <person name="Kelly D.E."/>
            <person name="Kiel J.A."/>
            <person name="Kim J.M."/>
            <person name="van der Klei I.J."/>
            <person name="Klis F.M."/>
            <person name="Kovalchuk A."/>
            <person name="Krasevec N."/>
            <person name="Kubicek C.P."/>
            <person name="Liu B."/>
            <person name="Maccabe A."/>
            <person name="Meyer V."/>
            <person name="Mirabito P."/>
            <person name="Miskei M."/>
            <person name="Mos M."/>
            <person name="Mullins J."/>
            <person name="Nelson D.R."/>
            <person name="Nielsen J."/>
            <person name="Oakley B.R."/>
            <person name="Osmani S.A."/>
            <person name="Pakula T."/>
            <person name="Paszewski A."/>
            <person name="Paulsen I."/>
            <person name="Pilsyk S."/>
            <person name="Pocsi I."/>
            <person name="Punt P.J."/>
            <person name="Ram A.F."/>
            <person name="Ren Q."/>
            <person name="Robellet X."/>
            <person name="Robson G."/>
            <person name="Seiboth B."/>
            <person name="van Solingen P."/>
            <person name="Specht T."/>
            <person name="Sun J."/>
            <person name="Taheri-Talesh N."/>
            <person name="Takeshita N."/>
            <person name="Ussery D."/>
            <person name="vanKuyk P.A."/>
            <person name="Visser H."/>
            <person name="van de Vondervoort P.J."/>
            <person name="de Vries R.P."/>
            <person name="Walton J."/>
            <person name="Xiang X."/>
            <person name="Xiong Y."/>
            <person name="Zeng A.P."/>
            <person name="Brandt B.W."/>
            <person name="Cornell M.J."/>
            <person name="van den Hondel C.A."/>
            <person name="Visser J."/>
            <person name="Oliver S.G."/>
            <person name="Turner G."/>
        </authorList>
    </citation>
    <scope>GENOME REANNOTATION</scope>
    <source>
        <strain>FGSC A4 / ATCC 38163 / CBS 112.46 / NRRL 194 / M139</strain>
    </source>
</reference>
<sequence>MSDSKDSKGKAPQKPNDAEQTPGGKLTPQAAEALLENNPSLKNELGGLDKDKALEALRKMDISELLTGLSLTGKNKKDMAAFKFWQTQPVPRFDEAASNAAGGPIKMIDPEKVSKEPDALIEGFEWTTLDLTNEEELRELWDLLTYHYVEDDNAMFRFRYSKSFLHWALMSPGWRKEWHVGVRATKSRKLVASISGVPTQIRVRGQKIKVTEINFLCIHKKLRSKRLAPVLIKEITRRCYLNGIYQAIYTAGVVLPTPVSSCRYYHRPLDWLKLYEVGFSPLPRGSTKARQITKNHLPSHTSTPNLRPMEAKDVDAVHDLLERYLNQFDIHQAFTREEIDHWLVYKESPQKEQVIWSYVVEDPETHKITDFFSFYNLESTVIQHPKHDCVRAAYLYYYATETAFLDDQKALKNRLQMLMNDALILAKKAQFDVFNALTSHHNPLFLEQLKFGAGDGQLHFYLYNYRTAPIAGGVNEKNLPDENRMGGVGVVML</sequence>
<accession>Q8TFN1</accession>
<accession>C8V6J4</accession>
<accession>Q5B6J1</accession>
<comment type="function">
    <text evidence="4">Adds a myristoyl group to the N-terminal glycine residue of certain cellular proteins.</text>
</comment>
<comment type="catalytic activity">
    <reaction evidence="4">
        <text>N-terminal glycyl-[protein] + tetradecanoyl-CoA = N-tetradecanoylglycyl-[protein] + CoA + H(+)</text>
        <dbReference type="Rhea" id="RHEA:15521"/>
        <dbReference type="Rhea" id="RHEA-COMP:12666"/>
        <dbReference type="Rhea" id="RHEA-COMP:12667"/>
        <dbReference type="ChEBI" id="CHEBI:15378"/>
        <dbReference type="ChEBI" id="CHEBI:57287"/>
        <dbReference type="ChEBI" id="CHEBI:57385"/>
        <dbReference type="ChEBI" id="CHEBI:64723"/>
        <dbReference type="ChEBI" id="CHEBI:133050"/>
        <dbReference type="EC" id="2.3.1.97"/>
    </reaction>
</comment>
<comment type="subunit">
    <text evidence="1">Monomer.</text>
</comment>
<comment type="subcellular location">
    <subcellularLocation>
        <location>Cytoplasm</location>
    </subcellularLocation>
</comment>
<comment type="similarity">
    <text evidence="5">Belongs to the NMT family.</text>
</comment>
<comment type="sequence caution" evidence="5">
    <conflict type="erroneous gene model prediction">
        <sequence resource="EMBL-CDS" id="AAL14203"/>
    </conflict>
</comment>
<comment type="sequence caution" evidence="5">
    <conflict type="erroneous gene model prediction">
        <sequence resource="EMBL-CDS" id="EAA59104"/>
    </conflict>
</comment>
<protein>
    <recommendedName>
        <fullName>Glycylpeptide N-tetradecanoyltransferase</fullName>
        <ecNumber evidence="4">2.3.1.97</ecNumber>
    </recommendedName>
    <alternativeName>
        <fullName>Myristoyl-CoA:protein N-myristoyltransferase</fullName>
        <shortName>NMT</shortName>
    </alternativeName>
    <alternativeName>
        <fullName>Peptide N-myristoyltransferase</fullName>
    </alternativeName>
</protein>
<name>NMT_EMENI</name>
<keyword id="KW-0012">Acyltransferase</keyword>
<keyword id="KW-0963">Cytoplasm</keyword>
<keyword id="KW-1185">Reference proteome</keyword>
<keyword id="KW-0808">Transferase</keyword>